<comment type="function">
    <text evidence="1">May be involved in the degradation process of specific misfolded endoplasmic reticulum (ER) luminal proteins. May also involved in endoplasmic reticulum stress-induced pre-emptive quality control, a mechanism that selectively attenuates the translocation of newly synthesized proteins into the endoplasmic reticulum and reroutes them to the cytosol for proteasomal degradation.</text>
</comment>
<comment type="subcellular location">
    <subcellularLocation>
        <location evidence="1">Endoplasmic reticulum membrane</location>
        <topology evidence="1">Multi-pass membrane protein</topology>
    </subcellularLocation>
</comment>
<comment type="induction">
    <text>By endoplasmic reticulum stress.</text>
</comment>
<comment type="similarity">
    <text evidence="4">Belongs to the derlin family.</text>
</comment>
<evidence type="ECO:0000250" key="1">
    <source>
        <dbReference type="UniProtKB" id="Q9BUN8"/>
    </source>
</evidence>
<evidence type="ECO:0000255" key="2"/>
<evidence type="ECO:0000256" key="3">
    <source>
        <dbReference type="SAM" id="MobiDB-lite"/>
    </source>
</evidence>
<evidence type="ECO:0000305" key="4"/>
<evidence type="ECO:0000312" key="5">
    <source>
        <dbReference type="EMBL" id="AAL39214.1"/>
    </source>
</evidence>
<evidence type="ECO:0000312" key="6">
    <source>
        <dbReference type="FlyBase" id="FBgn0267972"/>
    </source>
</evidence>
<organism>
    <name type="scientific">Drosophila melanogaster</name>
    <name type="common">Fruit fly</name>
    <dbReference type="NCBI Taxonomy" id="7227"/>
    <lineage>
        <taxon>Eukaryota</taxon>
        <taxon>Metazoa</taxon>
        <taxon>Ecdysozoa</taxon>
        <taxon>Arthropoda</taxon>
        <taxon>Hexapoda</taxon>
        <taxon>Insecta</taxon>
        <taxon>Pterygota</taxon>
        <taxon>Neoptera</taxon>
        <taxon>Endopterygota</taxon>
        <taxon>Diptera</taxon>
        <taxon>Brachycera</taxon>
        <taxon>Muscomorpha</taxon>
        <taxon>Ephydroidea</taxon>
        <taxon>Drosophilidae</taxon>
        <taxon>Drosophila</taxon>
        <taxon>Sophophora</taxon>
    </lineage>
</organism>
<reference key="1">
    <citation type="journal article" date="2000" name="Science">
        <title>The genome sequence of Drosophila melanogaster.</title>
        <authorList>
            <person name="Adams M.D."/>
            <person name="Celniker S.E."/>
            <person name="Holt R.A."/>
            <person name="Evans C.A."/>
            <person name="Gocayne J.D."/>
            <person name="Amanatides P.G."/>
            <person name="Scherer S.E."/>
            <person name="Li P.W."/>
            <person name="Hoskins R.A."/>
            <person name="Galle R.F."/>
            <person name="George R.A."/>
            <person name="Lewis S.E."/>
            <person name="Richards S."/>
            <person name="Ashburner M."/>
            <person name="Henderson S.N."/>
            <person name="Sutton G.G."/>
            <person name="Wortman J.R."/>
            <person name="Yandell M.D."/>
            <person name="Zhang Q."/>
            <person name="Chen L.X."/>
            <person name="Brandon R.C."/>
            <person name="Rogers Y.-H.C."/>
            <person name="Blazej R.G."/>
            <person name="Champe M."/>
            <person name="Pfeiffer B.D."/>
            <person name="Wan K.H."/>
            <person name="Doyle C."/>
            <person name="Baxter E.G."/>
            <person name="Helt G."/>
            <person name="Nelson C.R."/>
            <person name="Miklos G.L.G."/>
            <person name="Abril J.F."/>
            <person name="Agbayani A."/>
            <person name="An H.-J."/>
            <person name="Andrews-Pfannkoch C."/>
            <person name="Baldwin D."/>
            <person name="Ballew R.M."/>
            <person name="Basu A."/>
            <person name="Baxendale J."/>
            <person name="Bayraktaroglu L."/>
            <person name="Beasley E.M."/>
            <person name="Beeson K.Y."/>
            <person name="Benos P.V."/>
            <person name="Berman B.P."/>
            <person name="Bhandari D."/>
            <person name="Bolshakov S."/>
            <person name="Borkova D."/>
            <person name="Botchan M.R."/>
            <person name="Bouck J."/>
            <person name="Brokstein P."/>
            <person name="Brottier P."/>
            <person name="Burtis K.C."/>
            <person name="Busam D.A."/>
            <person name="Butler H."/>
            <person name="Cadieu E."/>
            <person name="Center A."/>
            <person name="Chandra I."/>
            <person name="Cherry J.M."/>
            <person name="Cawley S."/>
            <person name="Dahlke C."/>
            <person name="Davenport L.B."/>
            <person name="Davies P."/>
            <person name="de Pablos B."/>
            <person name="Delcher A."/>
            <person name="Deng Z."/>
            <person name="Mays A.D."/>
            <person name="Dew I."/>
            <person name="Dietz S.M."/>
            <person name="Dodson K."/>
            <person name="Doup L.E."/>
            <person name="Downes M."/>
            <person name="Dugan-Rocha S."/>
            <person name="Dunkov B.C."/>
            <person name="Dunn P."/>
            <person name="Durbin K.J."/>
            <person name="Evangelista C.C."/>
            <person name="Ferraz C."/>
            <person name="Ferriera S."/>
            <person name="Fleischmann W."/>
            <person name="Fosler C."/>
            <person name="Gabrielian A.E."/>
            <person name="Garg N.S."/>
            <person name="Gelbart W.M."/>
            <person name="Glasser K."/>
            <person name="Glodek A."/>
            <person name="Gong F."/>
            <person name="Gorrell J.H."/>
            <person name="Gu Z."/>
            <person name="Guan P."/>
            <person name="Harris M."/>
            <person name="Harris N.L."/>
            <person name="Harvey D.A."/>
            <person name="Heiman T.J."/>
            <person name="Hernandez J.R."/>
            <person name="Houck J."/>
            <person name="Hostin D."/>
            <person name="Houston K.A."/>
            <person name="Howland T.J."/>
            <person name="Wei M.-H."/>
            <person name="Ibegwam C."/>
            <person name="Jalali M."/>
            <person name="Kalush F."/>
            <person name="Karpen G.H."/>
            <person name="Ke Z."/>
            <person name="Kennison J.A."/>
            <person name="Ketchum K.A."/>
            <person name="Kimmel B.E."/>
            <person name="Kodira C.D."/>
            <person name="Kraft C.L."/>
            <person name="Kravitz S."/>
            <person name="Kulp D."/>
            <person name="Lai Z."/>
            <person name="Lasko P."/>
            <person name="Lei Y."/>
            <person name="Levitsky A.A."/>
            <person name="Li J.H."/>
            <person name="Li Z."/>
            <person name="Liang Y."/>
            <person name="Lin X."/>
            <person name="Liu X."/>
            <person name="Mattei B."/>
            <person name="McIntosh T.C."/>
            <person name="McLeod M.P."/>
            <person name="McPherson D."/>
            <person name="Merkulov G."/>
            <person name="Milshina N.V."/>
            <person name="Mobarry C."/>
            <person name="Morris J."/>
            <person name="Moshrefi A."/>
            <person name="Mount S.M."/>
            <person name="Moy M."/>
            <person name="Murphy B."/>
            <person name="Murphy L."/>
            <person name="Muzny D.M."/>
            <person name="Nelson D.L."/>
            <person name="Nelson D.R."/>
            <person name="Nelson K.A."/>
            <person name="Nixon K."/>
            <person name="Nusskern D.R."/>
            <person name="Pacleb J.M."/>
            <person name="Palazzolo M."/>
            <person name="Pittman G.S."/>
            <person name="Pan S."/>
            <person name="Pollard J."/>
            <person name="Puri V."/>
            <person name="Reese M.G."/>
            <person name="Reinert K."/>
            <person name="Remington K."/>
            <person name="Saunders R.D.C."/>
            <person name="Scheeler F."/>
            <person name="Shen H."/>
            <person name="Shue B.C."/>
            <person name="Siden-Kiamos I."/>
            <person name="Simpson M."/>
            <person name="Skupski M.P."/>
            <person name="Smith T.J."/>
            <person name="Spier E."/>
            <person name="Spradling A.C."/>
            <person name="Stapleton M."/>
            <person name="Strong R."/>
            <person name="Sun E."/>
            <person name="Svirskas R."/>
            <person name="Tector C."/>
            <person name="Turner R."/>
            <person name="Venter E."/>
            <person name="Wang A.H."/>
            <person name="Wang X."/>
            <person name="Wang Z.-Y."/>
            <person name="Wassarman D.A."/>
            <person name="Weinstock G.M."/>
            <person name="Weissenbach J."/>
            <person name="Williams S.M."/>
            <person name="Woodage T."/>
            <person name="Worley K.C."/>
            <person name="Wu D."/>
            <person name="Yang S."/>
            <person name="Yao Q.A."/>
            <person name="Ye J."/>
            <person name="Yeh R.-F."/>
            <person name="Zaveri J.S."/>
            <person name="Zhan M."/>
            <person name="Zhang G."/>
            <person name="Zhao Q."/>
            <person name="Zheng L."/>
            <person name="Zheng X.H."/>
            <person name="Zhong F.N."/>
            <person name="Zhong W."/>
            <person name="Zhou X."/>
            <person name="Zhu S.C."/>
            <person name="Zhu X."/>
            <person name="Smith H.O."/>
            <person name="Gibbs R.A."/>
            <person name="Myers E.W."/>
            <person name="Rubin G.M."/>
            <person name="Venter J.C."/>
        </authorList>
    </citation>
    <scope>NUCLEOTIDE SEQUENCE [LARGE SCALE GENOMIC DNA]</scope>
    <source>
        <strain>Berkeley</strain>
    </source>
</reference>
<reference key="2">
    <citation type="journal article" date="2002" name="Genome Biol.">
        <title>Annotation of the Drosophila melanogaster euchromatic genome: a systematic review.</title>
        <authorList>
            <person name="Misra S."/>
            <person name="Crosby M.A."/>
            <person name="Mungall C.J."/>
            <person name="Matthews B.B."/>
            <person name="Campbell K.S."/>
            <person name="Hradecky P."/>
            <person name="Huang Y."/>
            <person name="Kaminker J.S."/>
            <person name="Millburn G.H."/>
            <person name="Prochnik S.E."/>
            <person name="Smith C.D."/>
            <person name="Tupy J.L."/>
            <person name="Whitfield E.J."/>
            <person name="Bayraktaroglu L."/>
            <person name="Berman B.P."/>
            <person name="Bettencourt B.R."/>
            <person name="Celniker S.E."/>
            <person name="de Grey A.D.N.J."/>
            <person name="Drysdale R.A."/>
            <person name="Harris N.L."/>
            <person name="Richter J."/>
            <person name="Russo S."/>
            <person name="Schroeder A.J."/>
            <person name="Shu S.Q."/>
            <person name="Stapleton M."/>
            <person name="Yamada C."/>
            <person name="Ashburner M."/>
            <person name="Gelbart W.M."/>
            <person name="Rubin G.M."/>
            <person name="Lewis S.E."/>
        </authorList>
    </citation>
    <scope>GENOME REANNOTATION</scope>
    <source>
        <strain>Berkeley</strain>
    </source>
</reference>
<reference key="3">
    <citation type="journal article" date="2002" name="Genome Biol.">
        <title>A Drosophila full-length cDNA resource.</title>
        <authorList>
            <person name="Stapleton M."/>
            <person name="Carlson J.W."/>
            <person name="Brokstein P."/>
            <person name="Yu C."/>
            <person name="Champe M."/>
            <person name="George R.A."/>
            <person name="Guarin H."/>
            <person name="Kronmiller B."/>
            <person name="Pacleb J.M."/>
            <person name="Park S."/>
            <person name="Wan K.H."/>
            <person name="Rubin G.M."/>
            <person name="Celniker S.E."/>
        </authorList>
    </citation>
    <scope>NUCLEOTIDE SEQUENCE [LARGE SCALE MRNA]</scope>
    <source>
        <strain>Berkeley</strain>
        <tissue>Head</tissue>
    </source>
</reference>
<keyword id="KW-0256">Endoplasmic reticulum</keyword>
<keyword id="KW-0472">Membrane</keyword>
<keyword id="KW-1185">Reference proteome</keyword>
<keyword id="KW-0346">Stress response</keyword>
<keyword id="KW-0812">Transmembrane</keyword>
<keyword id="KW-1133">Transmembrane helix</keyword>
<dbReference type="EMBL" id="AE014134">
    <property type="protein sequence ID" value="AAF51324.1"/>
    <property type="molecule type" value="Genomic_DNA"/>
</dbReference>
<dbReference type="EMBL" id="AY069069">
    <property type="protein sequence ID" value="AAL39214.1"/>
    <property type="molecule type" value="mRNA"/>
</dbReference>
<dbReference type="RefSeq" id="NP_001259892.1">
    <property type="nucleotide sequence ID" value="NM_001272963.1"/>
</dbReference>
<dbReference type="RefSeq" id="NP_608632.1">
    <property type="nucleotide sequence ID" value="NM_134788.4"/>
</dbReference>
<dbReference type="SMR" id="Q9VQ57"/>
<dbReference type="BioGRID" id="59604">
    <property type="interactions" value="11"/>
</dbReference>
<dbReference type="FunCoup" id="Q9VQ57">
    <property type="interactions" value="1142"/>
</dbReference>
<dbReference type="IntAct" id="Q9VQ57">
    <property type="interactions" value="7"/>
</dbReference>
<dbReference type="STRING" id="7227.FBpp0306799"/>
<dbReference type="PaxDb" id="7227-FBpp0077489"/>
<dbReference type="DNASU" id="33369"/>
<dbReference type="EnsemblMetazoa" id="FBtr0077813">
    <property type="protein sequence ID" value="FBpp0077489"/>
    <property type="gene ID" value="FBgn0267972"/>
</dbReference>
<dbReference type="EnsemblMetazoa" id="FBtr0334758">
    <property type="protein sequence ID" value="FBpp0306799"/>
    <property type="gene ID" value="FBgn0267972"/>
</dbReference>
<dbReference type="GeneID" id="33369"/>
<dbReference type="KEGG" id="dme:Dmel_CG10908"/>
<dbReference type="AGR" id="FB:FBgn0267972"/>
<dbReference type="CTD" id="33369"/>
<dbReference type="FlyBase" id="FBgn0267972">
    <property type="gene designation" value="Der-1"/>
</dbReference>
<dbReference type="VEuPathDB" id="VectorBase:FBgn0267972"/>
<dbReference type="eggNOG" id="KOG0858">
    <property type="taxonomic scope" value="Eukaryota"/>
</dbReference>
<dbReference type="GeneTree" id="ENSGT00530000063156"/>
<dbReference type="HOGENOM" id="CLU_051898_3_1_1"/>
<dbReference type="InParanoid" id="Q9VQ57"/>
<dbReference type="OMA" id="LWRCVTS"/>
<dbReference type="OrthoDB" id="19102at2759"/>
<dbReference type="PhylomeDB" id="Q9VQ57"/>
<dbReference type="Reactome" id="R-DME-382556">
    <property type="pathway name" value="ABC-family proteins mediated transport"/>
</dbReference>
<dbReference type="Reactome" id="R-DME-532668">
    <property type="pathway name" value="N-glycan trimming in the ER and Calnexin/Calreticulin cycle"/>
</dbReference>
<dbReference type="BioGRID-ORCS" id="33369">
    <property type="hits" value="0 hits in 1 CRISPR screen"/>
</dbReference>
<dbReference type="GenomeRNAi" id="33369"/>
<dbReference type="PRO" id="PR:Q9VQ57"/>
<dbReference type="Proteomes" id="UP000000803">
    <property type="component" value="Chromosome 2L"/>
</dbReference>
<dbReference type="Bgee" id="FBgn0267972">
    <property type="expression patterns" value="Expressed in spermathecum and 169 other cell types or tissues"/>
</dbReference>
<dbReference type="ExpressionAtlas" id="Q9VQ57">
    <property type="expression patterns" value="baseline and differential"/>
</dbReference>
<dbReference type="GO" id="GO:0005789">
    <property type="term" value="C:endoplasmic reticulum membrane"/>
    <property type="evidence" value="ECO:0000250"/>
    <property type="project" value="UniProtKB"/>
</dbReference>
<dbReference type="GO" id="GO:0005047">
    <property type="term" value="F:signal recognition particle binding"/>
    <property type="evidence" value="ECO:0000250"/>
    <property type="project" value="UniProtKB"/>
</dbReference>
<dbReference type="GO" id="GO:0030968">
    <property type="term" value="P:endoplasmic reticulum unfolded protein response"/>
    <property type="evidence" value="ECO:0000318"/>
    <property type="project" value="GO_Central"/>
</dbReference>
<dbReference type="GO" id="GO:0036503">
    <property type="term" value="P:ERAD pathway"/>
    <property type="evidence" value="ECO:0000250"/>
    <property type="project" value="UniProtKB"/>
</dbReference>
<dbReference type="GO" id="GO:0043065">
    <property type="term" value="P:positive regulation of apoptotic process"/>
    <property type="evidence" value="ECO:0000315"/>
    <property type="project" value="FlyBase"/>
</dbReference>
<dbReference type="GO" id="GO:0006515">
    <property type="term" value="P:protein quality control for misfolded or incompletely synthesized proteins"/>
    <property type="evidence" value="ECO:0000250"/>
    <property type="project" value="UniProtKB"/>
</dbReference>
<dbReference type="GO" id="GO:0034976">
    <property type="term" value="P:response to endoplasmic reticulum stress"/>
    <property type="evidence" value="ECO:0000315"/>
    <property type="project" value="FlyBase"/>
</dbReference>
<dbReference type="InterPro" id="IPR007599">
    <property type="entry name" value="DER1"/>
</dbReference>
<dbReference type="InterPro" id="IPR035952">
    <property type="entry name" value="Rhomboid-like_sf"/>
</dbReference>
<dbReference type="PANTHER" id="PTHR11009">
    <property type="entry name" value="DER1-LIKE PROTEIN, DERLIN"/>
    <property type="match status" value="1"/>
</dbReference>
<dbReference type="Pfam" id="PF04511">
    <property type="entry name" value="DER1"/>
    <property type="match status" value="1"/>
</dbReference>
<dbReference type="SUPFAM" id="SSF144091">
    <property type="entry name" value="Rhomboid-like"/>
    <property type="match status" value="1"/>
</dbReference>
<sequence length="245" mass="28256">MDAGVWYRSLPRFTRYWLTATVVLSMLCRFDVIPLHWLHLDRSAVFSKLQLWRCMTSLFVFPISSNTAFHFLINCFFIVQYSSKLEKDQYSRSPADYLYLLIVSAVLANIGGMIFNVYFLMDTLVLAITYIWCQLNKDVTVSFWFGTRFKAMYLPWVLAAFEFIFHFSLASLVGIFVGHVYYFFKFQYSQDLGGTPLLETPQFLKRLVPDVSGGFGGFGLPPESRAPPRQATESPWGRGMTLGRN</sequence>
<protein>
    <recommendedName>
        <fullName evidence="4">Derlin-1</fullName>
    </recommendedName>
    <alternativeName>
        <fullName evidence="4">DER1-like protein 1</fullName>
    </alternativeName>
</protein>
<feature type="chain" id="PRO_0000219052" description="Derlin-1">
    <location>
        <begin position="1"/>
        <end position="245"/>
    </location>
</feature>
<feature type="topological domain" description="Cytoplasmic" evidence="2">
    <location>
        <begin position="1"/>
        <end position="17"/>
    </location>
</feature>
<feature type="transmembrane region" description="Helical; Name=1" evidence="2">
    <location>
        <begin position="18"/>
        <end position="38"/>
    </location>
</feature>
<feature type="topological domain" description="Lumenal" evidence="2">
    <location>
        <begin position="39"/>
        <end position="58"/>
    </location>
</feature>
<feature type="transmembrane region" description="Helical; Name=2" evidence="2">
    <location>
        <begin position="59"/>
        <end position="79"/>
    </location>
</feature>
<feature type="topological domain" description="Cytoplasmic" evidence="2">
    <location>
        <begin position="80"/>
        <end position="99"/>
    </location>
</feature>
<feature type="transmembrane region" description="Helical; Name=3" evidence="2">
    <location>
        <begin position="100"/>
        <end position="120"/>
    </location>
</feature>
<feature type="topological domain" description="Lumenal" evidence="2">
    <location>
        <begin position="121"/>
        <end position="156"/>
    </location>
</feature>
<feature type="transmembrane region" description="Helical; Name=4" evidence="2">
    <location>
        <begin position="157"/>
        <end position="177"/>
    </location>
</feature>
<feature type="topological domain" description="Cytoplasmic" evidence="2">
    <location>
        <begin position="178"/>
        <end position="245"/>
    </location>
</feature>
<feature type="region of interest" description="Disordered" evidence="3">
    <location>
        <begin position="218"/>
        <end position="245"/>
    </location>
</feature>
<accession>Q9VQ57</accession>
<gene>
    <name evidence="6" type="primary">Der-1</name>
    <name evidence="5" type="ORF">CG10908</name>
</gene>
<proteinExistence type="evidence at transcript level"/>
<name>DERL1_DROME</name>